<feature type="chain" id="PRO_0000357316" description="Very-long-chain 3-oxoacyl-CoA reductase">
    <location>
        <begin position="1"/>
        <end position="332"/>
    </location>
</feature>
<feature type="transmembrane region" description="Helical" evidence="4">
    <location>
        <begin position="15"/>
        <end position="35"/>
    </location>
</feature>
<feature type="active site" description="Proton donor" evidence="2">
    <location>
        <position position="209"/>
    </location>
</feature>
<feature type="active site" description="Lowers pKa of active site Tyr" evidence="2">
    <location>
        <position position="213"/>
    </location>
</feature>
<feature type="binding site" evidence="1">
    <location>
        <position position="60"/>
    </location>
    <ligand>
        <name>NADP(+)</name>
        <dbReference type="ChEBI" id="CHEBI:58349"/>
    </ligand>
</feature>
<feature type="binding site" evidence="1">
    <location>
        <position position="115"/>
    </location>
    <ligand>
        <name>NADP(+)</name>
        <dbReference type="ChEBI" id="CHEBI:58349"/>
    </ligand>
</feature>
<feature type="binding site" evidence="1">
    <location>
        <position position="123"/>
    </location>
    <ligand>
        <name>NADP(+)</name>
        <dbReference type="ChEBI" id="CHEBI:58349"/>
    </ligand>
</feature>
<feature type="binding site" evidence="2">
    <location>
        <position position="142"/>
    </location>
    <ligand>
        <name>NADP(+)</name>
        <dbReference type="ChEBI" id="CHEBI:58349"/>
    </ligand>
</feature>
<feature type="binding site" evidence="1">
    <location>
        <position position="177"/>
    </location>
    <ligand>
        <name>NADP(+)</name>
        <dbReference type="ChEBI" id="CHEBI:58349"/>
    </ligand>
</feature>
<feature type="binding site" evidence="2">
    <location>
        <position position="209"/>
    </location>
    <ligand>
        <name>NADP(+)</name>
        <dbReference type="ChEBI" id="CHEBI:58349"/>
    </ligand>
</feature>
<feature type="binding site" evidence="2">
    <location>
        <position position="213"/>
    </location>
    <ligand>
        <name>NADP(+)</name>
        <dbReference type="ChEBI" id="CHEBI:58349"/>
    </ligand>
</feature>
<feature type="binding site" evidence="2">
    <location>
        <position position="242"/>
    </location>
    <ligand>
        <name>NADP(+)</name>
        <dbReference type="ChEBI" id="CHEBI:58349"/>
    </ligand>
</feature>
<feature type="binding site" evidence="1">
    <location>
        <position position="244"/>
    </location>
    <ligand>
        <name>NADP(+)</name>
        <dbReference type="ChEBI" id="CHEBI:58349"/>
    </ligand>
</feature>
<dbReference type="EC" id="1.1.1.330" evidence="4"/>
<dbReference type="EMBL" id="CM002239">
    <property type="protein sequence ID" value="EAA27795.1"/>
    <property type="molecule type" value="Genomic_DNA"/>
</dbReference>
<dbReference type="RefSeq" id="XP_957031.1">
    <property type="nucleotide sequence ID" value="XM_951938.3"/>
</dbReference>
<dbReference type="SMR" id="Q7RYE5"/>
<dbReference type="FunCoup" id="Q7RYE5">
    <property type="interactions" value="646"/>
</dbReference>
<dbReference type="STRING" id="367110.Q7RYE5"/>
<dbReference type="PaxDb" id="5141-EFNCRP00000005132"/>
<dbReference type="EnsemblFungi" id="EAA27795">
    <property type="protein sequence ID" value="EAA27795"/>
    <property type="gene ID" value="NCU04462"/>
</dbReference>
<dbReference type="GeneID" id="23568430"/>
<dbReference type="KEGG" id="ncr:NCU04462"/>
<dbReference type="VEuPathDB" id="FungiDB:NCU04462"/>
<dbReference type="HOGENOM" id="CLU_010194_38_0_1"/>
<dbReference type="InParanoid" id="Q7RYE5"/>
<dbReference type="OMA" id="LVAPGMM"/>
<dbReference type="OrthoDB" id="5545019at2759"/>
<dbReference type="UniPathway" id="UPA00094"/>
<dbReference type="Proteomes" id="UP000001805">
    <property type="component" value="Chromosome 4, Linkage Group IV"/>
</dbReference>
<dbReference type="GO" id="GO:0005783">
    <property type="term" value="C:endoplasmic reticulum"/>
    <property type="evidence" value="ECO:0000318"/>
    <property type="project" value="GO_Central"/>
</dbReference>
<dbReference type="GO" id="GO:0005789">
    <property type="term" value="C:endoplasmic reticulum membrane"/>
    <property type="evidence" value="ECO:0007669"/>
    <property type="project" value="UniProtKB-SubCell"/>
</dbReference>
<dbReference type="GO" id="GO:0045703">
    <property type="term" value="F:ketoreductase activity"/>
    <property type="evidence" value="ECO:0007669"/>
    <property type="project" value="UniProtKB-UniRule"/>
</dbReference>
<dbReference type="GO" id="GO:0141040">
    <property type="term" value="F:very-long-chain 3-oxoacyl-CoA reductase activity"/>
    <property type="evidence" value="ECO:0007669"/>
    <property type="project" value="UniProtKB-EC"/>
</dbReference>
<dbReference type="GO" id="GO:0030497">
    <property type="term" value="P:fatty acid elongation"/>
    <property type="evidence" value="ECO:0000318"/>
    <property type="project" value="GO_Central"/>
</dbReference>
<dbReference type="GO" id="GO:0030148">
    <property type="term" value="P:sphingolipid biosynthetic process"/>
    <property type="evidence" value="ECO:0007669"/>
    <property type="project" value="EnsemblFungi"/>
</dbReference>
<dbReference type="GO" id="GO:0042761">
    <property type="term" value="P:very long-chain fatty acid biosynthetic process"/>
    <property type="evidence" value="ECO:0007669"/>
    <property type="project" value="EnsemblFungi"/>
</dbReference>
<dbReference type="CDD" id="cd05356">
    <property type="entry name" value="17beta-HSD1_like_SDR_c"/>
    <property type="match status" value="1"/>
</dbReference>
<dbReference type="FunFam" id="3.40.50.720:FF:000317">
    <property type="entry name" value="Very-long-chain 3-oxoacyl-CoA reductase"/>
    <property type="match status" value="1"/>
</dbReference>
<dbReference type="Gene3D" id="3.40.50.720">
    <property type="entry name" value="NAD(P)-binding Rossmann-like Domain"/>
    <property type="match status" value="1"/>
</dbReference>
<dbReference type="HAMAP" id="MF_03107">
    <property type="entry name" value="3_ketoreductase"/>
    <property type="match status" value="1"/>
</dbReference>
<dbReference type="InterPro" id="IPR027533">
    <property type="entry name" value="3_ketoreductase_fungal"/>
</dbReference>
<dbReference type="InterPro" id="IPR036291">
    <property type="entry name" value="NAD(P)-bd_dom_sf"/>
</dbReference>
<dbReference type="InterPro" id="IPR020904">
    <property type="entry name" value="Sc_DH/Rdtase_CS"/>
</dbReference>
<dbReference type="InterPro" id="IPR002347">
    <property type="entry name" value="SDR_fam"/>
</dbReference>
<dbReference type="PANTHER" id="PTHR43086:SF2">
    <property type="entry name" value="HYDROXYSTEROID DEHYDROGENASE-LIKE PROTEIN 1"/>
    <property type="match status" value="1"/>
</dbReference>
<dbReference type="PANTHER" id="PTHR43086">
    <property type="entry name" value="VERY-LONG-CHAIN 3-OXOOACYL-COA REDUCTASE"/>
    <property type="match status" value="1"/>
</dbReference>
<dbReference type="Pfam" id="PF00106">
    <property type="entry name" value="adh_short"/>
    <property type="match status" value="1"/>
</dbReference>
<dbReference type="PIRSF" id="PIRSF000126">
    <property type="entry name" value="11-beta-HSD1"/>
    <property type="match status" value="1"/>
</dbReference>
<dbReference type="PRINTS" id="PR00081">
    <property type="entry name" value="GDHRDH"/>
</dbReference>
<dbReference type="SUPFAM" id="SSF51735">
    <property type="entry name" value="NAD(P)-binding Rossmann-fold domains"/>
    <property type="match status" value="1"/>
</dbReference>
<dbReference type="PROSITE" id="PS00061">
    <property type="entry name" value="ADH_SHORT"/>
    <property type="match status" value="1"/>
</dbReference>
<gene>
    <name type="ORF">NCU11297</name>
</gene>
<comment type="function">
    <text evidence="4">Component of the microsomal membrane bound fatty acid elongation system, which produces the 26-carbon very long-chain fatty acids (VLCFA) from palmitate. Catalyzes the reduction of the 3-ketoacyl-CoA intermediate that is formed in each cycle of fatty acid elongation. VLCFAs serve as precursors for ceramide and sphingolipids.</text>
</comment>
<comment type="catalytic activity">
    <reaction evidence="4">
        <text>a very-long-chain (3R)-3-hydroxyacyl-CoA + NADP(+) = a very-long-chain 3-oxoacyl-CoA + NADPH + H(+)</text>
        <dbReference type="Rhea" id="RHEA:48680"/>
        <dbReference type="ChEBI" id="CHEBI:15378"/>
        <dbReference type="ChEBI" id="CHEBI:57783"/>
        <dbReference type="ChEBI" id="CHEBI:58349"/>
        <dbReference type="ChEBI" id="CHEBI:85440"/>
        <dbReference type="ChEBI" id="CHEBI:90725"/>
        <dbReference type="EC" id="1.1.1.330"/>
    </reaction>
</comment>
<comment type="pathway">
    <text evidence="3">Lipid metabolism; fatty acid biosynthesis.</text>
</comment>
<comment type="subcellular location">
    <subcellularLocation>
        <location evidence="4">Endoplasmic reticulum membrane</location>
        <topology evidence="4">Single-pass membrane protein</topology>
    </subcellularLocation>
</comment>
<comment type="similarity">
    <text evidence="4">Belongs to the short-chain dehydrogenases/reductases (SDR) family.</text>
</comment>
<keyword id="KW-0256">Endoplasmic reticulum</keyword>
<keyword id="KW-0275">Fatty acid biosynthesis</keyword>
<keyword id="KW-0276">Fatty acid metabolism</keyword>
<keyword id="KW-0444">Lipid biosynthesis</keyword>
<keyword id="KW-0443">Lipid metabolism</keyword>
<keyword id="KW-0472">Membrane</keyword>
<keyword id="KW-0521">NADP</keyword>
<keyword id="KW-0560">Oxidoreductase</keyword>
<keyword id="KW-1185">Reference proteome</keyword>
<keyword id="KW-0812">Transmembrane</keyword>
<keyword id="KW-1133">Transmembrane helix</keyword>
<evidence type="ECO:0000250" key="1">
    <source>
        <dbReference type="UniProtKB" id="L0E2Z4"/>
    </source>
</evidence>
<evidence type="ECO:0000250" key="2">
    <source>
        <dbReference type="UniProtKB" id="O93868"/>
    </source>
</evidence>
<evidence type="ECO:0000250" key="3">
    <source>
        <dbReference type="UniProtKB" id="P38286"/>
    </source>
</evidence>
<evidence type="ECO:0000255" key="4">
    <source>
        <dbReference type="HAMAP-Rule" id="MF_03107"/>
    </source>
</evidence>
<organism>
    <name type="scientific">Neurospora crassa (strain ATCC 24698 / 74-OR23-1A / CBS 708.71 / DSM 1257 / FGSC 987)</name>
    <dbReference type="NCBI Taxonomy" id="367110"/>
    <lineage>
        <taxon>Eukaryota</taxon>
        <taxon>Fungi</taxon>
        <taxon>Dikarya</taxon>
        <taxon>Ascomycota</taxon>
        <taxon>Pezizomycotina</taxon>
        <taxon>Sordariomycetes</taxon>
        <taxon>Sordariomycetidae</taxon>
        <taxon>Sordariales</taxon>
        <taxon>Sordariaceae</taxon>
        <taxon>Neurospora</taxon>
    </lineage>
</organism>
<proteinExistence type="inferred from homology"/>
<protein>
    <recommendedName>
        <fullName evidence="4">Very-long-chain 3-oxoacyl-CoA reductase</fullName>
        <ecNumber evidence="4">1.1.1.330</ecNumber>
    </recommendedName>
    <alternativeName>
        <fullName evidence="4">3-ketoacyl-CoA reductase</fullName>
        <shortName evidence="4">3-ketoreductase</shortName>
        <shortName evidence="4">KAR</shortName>
    </alternativeName>
    <alternativeName>
        <fullName evidence="4">Microsomal beta-keto-reductase</fullName>
    </alternativeName>
</protein>
<accession>Q7RYE5</accession>
<name>MKAR_NEUCR</name>
<reference key="1">
    <citation type="journal article" date="2003" name="Nature">
        <title>The genome sequence of the filamentous fungus Neurospora crassa.</title>
        <authorList>
            <person name="Galagan J.E."/>
            <person name="Calvo S.E."/>
            <person name="Borkovich K.A."/>
            <person name="Selker E.U."/>
            <person name="Read N.D."/>
            <person name="Jaffe D.B."/>
            <person name="FitzHugh W."/>
            <person name="Ma L.-J."/>
            <person name="Smirnov S."/>
            <person name="Purcell S."/>
            <person name="Rehman B."/>
            <person name="Elkins T."/>
            <person name="Engels R."/>
            <person name="Wang S."/>
            <person name="Nielsen C.B."/>
            <person name="Butler J."/>
            <person name="Endrizzi M."/>
            <person name="Qui D."/>
            <person name="Ianakiev P."/>
            <person name="Bell-Pedersen D."/>
            <person name="Nelson M.A."/>
            <person name="Werner-Washburne M."/>
            <person name="Selitrennikoff C.P."/>
            <person name="Kinsey J.A."/>
            <person name="Braun E.L."/>
            <person name="Zelter A."/>
            <person name="Schulte U."/>
            <person name="Kothe G.O."/>
            <person name="Jedd G."/>
            <person name="Mewes H.-W."/>
            <person name="Staben C."/>
            <person name="Marcotte E."/>
            <person name="Greenberg D."/>
            <person name="Roy A."/>
            <person name="Foley K."/>
            <person name="Naylor J."/>
            <person name="Stange-Thomann N."/>
            <person name="Barrett R."/>
            <person name="Gnerre S."/>
            <person name="Kamal M."/>
            <person name="Kamvysselis M."/>
            <person name="Mauceli E.W."/>
            <person name="Bielke C."/>
            <person name="Rudd S."/>
            <person name="Frishman D."/>
            <person name="Krystofova S."/>
            <person name="Rasmussen C."/>
            <person name="Metzenberg R.L."/>
            <person name="Perkins D.D."/>
            <person name="Kroken S."/>
            <person name="Cogoni C."/>
            <person name="Macino G."/>
            <person name="Catcheside D.E.A."/>
            <person name="Li W."/>
            <person name="Pratt R.J."/>
            <person name="Osmani S.A."/>
            <person name="DeSouza C.P.C."/>
            <person name="Glass N.L."/>
            <person name="Orbach M.J."/>
            <person name="Berglund J.A."/>
            <person name="Voelker R."/>
            <person name="Yarden O."/>
            <person name="Plamann M."/>
            <person name="Seiler S."/>
            <person name="Dunlap J.C."/>
            <person name="Radford A."/>
            <person name="Aramayo R."/>
            <person name="Natvig D.O."/>
            <person name="Alex L.A."/>
            <person name="Mannhaupt G."/>
            <person name="Ebbole D.J."/>
            <person name="Freitag M."/>
            <person name="Paulsen I."/>
            <person name="Sachs M.S."/>
            <person name="Lander E.S."/>
            <person name="Nusbaum C."/>
            <person name="Birren B.W."/>
        </authorList>
    </citation>
    <scope>NUCLEOTIDE SEQUENCE [LARGE SCALE GENOMIC DNA]</scope>
    <source>
        <strain>ATCC 24698 / 74-OR23-1A / CBS 708.71 / DSM 1257 / FGSC 987</strain>
    </source>
</reference>
<sequence>MDKVAEIWGTVPQYGQWALAGIGALYVATRVGAFLQLLLNAFILSGTNLRKYGKKGTWAVITGASDGLGKEFAQQLASKGFNLVLVSRTQSKLDVLARELELRWDGFKAKTFAMDFSKDDDSDYERLAELIKGLDIGILINNVGQSHSIPVPFLQTDRDELQNIVTINCLGTLKTTKVVAPILAQRKKGLILTMGSFAGVMPTPYLATYSGSKAFLQHWSSALSAELKDQGVDVHLVVSYLVTTAMSKIRRTSLLIPNPKQFVRAALGKVGLNSSEPFPNTYTPWWSHAVFKWVVENTVGAYSYFTLRLNKNMHIDIRNRALRKAAREAKKQ</sequence>